<feature type="chain" id="PRO_0000217898" description="Photosystem II reaction center protein T">
    <location>
        <begin position="1"/>
        <end position="35"/>
    </location>
</feature>
<feature type="transmembrane region" description="Helical" evidence="1">
    <location>
        <begin position="3"/>
        <end position="23"/>
    </location>
</feature>
<comment type="function">
    <text evidence="1">Found at the monomer-monomer interface of the photosystem II (PS II) dimer, plays a role in assembly and dimerization of PSII. PSII is a light-driven water plastoquinone oxidoreductase, using light energy to abstract electrons from H(2)O, generating a proton gradient subsequently used for ATP formation.</text>
</comment>
<comment type="subunit">
    <text evidence="1">PSII is composed of 1 copy each of membrane proteins PsbA, PsbB, PsbC, PsbD, PsbE, PsbF, PsbH, PsbI, PsbJ, PsbK, PsbL, PsbM, PsbT, PsbY, PsbZ, Psb30/Ycf12, at least 3 peripheral proteins of the oxygen-evolving complex and a large number of cofactors. It forms dimeric complexes.</text>
</comment>
<comment type="subcellular location">
    <subcellularLocation>
        <location evidence="1">Plastid</location>
        <location evidence="1">Chloroplast thylakoid membrane</location>
        <topology evidence="1">Single-pass membrane protein</topology>
    </subcellularLocation>
</comment>
<comment type="similarity">
    <text evidence="1">Belongs to the PsbT family.</text>
</comment>
<protein>
    <recommendedName>
        <fullName evidence="1">Photosystem II reaction center protein T</fullName>
        <shortName evidence="1">PSII-T</shortName>
    </recommendedName>
</protein>
<evidence type="ECO:0000255" key="1">
    <source>
        <dbReference type="HAMAP-Rule" id="MF_00808"/>
    </source>
</evidence>
<dbReference type="EMBL" id="AY147507">
    <property type="protein sequence ID" value="AAN32132.1"/>
    <property type="molecule type" value="Genomic_DNA"/>
</dbReference>
<dbReference type="RefSeq" id="YP_009116369.1">
    <property type="nucleotide sequence ID" value="NC_026220.1"/>
</dbReference>
<dbReference type="SMR" id="Q67I71"/>
<dbReference type="GeneID" id="22909415"/>
<dbReference type="OrthoDB" id="1558483at2759"/>
<dbReference type="Proteomes" id="UP000515123">
    <property type="component" value="Chloroplast Pltd"/>
</dbReference>
<dbReference type="GO" id="GO:0009535">
    <property type="term" value="C:chloroplast thylakoid membrane"/>
    <property type="evidence" value="ECO:0007669"/>
    <property type="project" value="UniProtKB-SubCell"/>
</dbReference>
<dbReference type="GO" id="GO:0009539">
    <property type="term" value="C:photosystem II reaction center"/>
    <property type="evidence" value="ECO:0007669"/>
    <property type="project" value="InterPro"/>
</dbReference>
<dbReference type="GO" id="GO:0015979">
    <property type="term" value="P:photosynthesis"/>
    <property type="evidence" value="ECO:0007669"/>
    <property type="project" value="UniProtKB-UniRule"/>
</dbReference>
<dbReference type="HAMAP" id="MF_00808">
    <property type="entry name" value="PSII_PsbT"/>
    <property type="match status" value="1"/>
</dbReference>
<dbReference type="InterPro" id="IPR001743">
    <property type="entry name" value="PSII_PsbT"/>
</dbReference>
<dbReference type="InterPro" id="IPR037268">
    <property type="entry name" value="PSII_PsbT_sf"/>
</dbReference>
<dbReference type="PANTHER" id="PTHR36411">
    <property type="match status" value="1"/>
</dbReference>
<dbReference type="PANTHER" id="PTHR36411:SF2">
    <property type="entry name" value="PHOTOSYSTEM II REACTION CENTER PROTEIN T"/>
    <property type="match status" value="1"/>
</dbReference>
<dbReference type="Pfam" id="PF01405">
    <property type="entry name" value="PsbT"/>
    <property type="match status" value="1"/>
</dbReference>
<dbReference type="SUPFAM" id="SSF161029">
    <property type="entry name" value="Photosystem II reaction center protein T, PsbT"/>
    <property type="match status" value="1"/>
</dbReference>
<sequence length="35" mass="4077">MEALVYTFLLVSTLGIIFFAIFFREPPKVPTKKMK</sequence>
<gene>
    <name evidence="1" type="primary">psbT</name>
</gene>
<name>PSBT_ANACO</name>
<proteinExistence type="inferred from homology"/>
<organism>
    <name type="scientific">Ananas comosus</name>
    <name type="common">Pineapple</name>
    <name type="synonym">Ananas ananas</name>
    <dbReference type="NCBI Taxonomy" id="4615"/>
    <lineage>
        <taxon>Eukaryota</taxon>
        <taxon>Viridiplantae</taxon>
        <taxon>Streptophyta</taxon>
        <taxon>Embryophyta</taxon>
        <taxon>Tracheophyta</taxon>
        <taxon>Spermatophyta</taxon>
        <taxon>Magnoliopsida</taxon>
        <taxon>Liliopsida</taxon>
        <taxon>Poales</taxon>
        <taxon>Bromeliaceae</taxon>
        <taxon>Bromelioideae</taxon>
        <taxon>Ananas</taxon>
    </lineage>
</organism>
<geneLocation type="chloroplast"/>
<reference key="1">
    <citation type="submission" date="2002-09" db="EMBL/GenBank/DDBJ databases">
        <title>Phylogenetic relationships among the major lineages of Asparagales based on a large chloroplast data set.</title>
        <authorList>
            <person name="McPherson M.A."/>
            <person name="Rai H.S."/>
            <person name="Wong W.A."/>
            <person name="Graham S.W."/>
        </authorList>
    </citation>
    <scope>NUCLEOTIDE SEQUENCE [GENOMIC DNA]</scope>
</reference>
<keyword id="KW-0150">Chloroplast</keyword>
<keyword id="KW-0472">Membrane</keyword>
<keyword id="KW-0602">Photosynthesis</keyword>
<keyword id="KW-0604">Photosystem II</keyword>
<keyword id="KW-0934">Plastid</keyword>
<keyword id="KW-0793">Thylakoid</keyword>
<keyword id="KW-0812">Transmembrane</keyword>
<keyword id="KW-1133">Transmembrane helix</keyword>
<accession>Q67I71</accession>